<evidence type="ECO:0000250" key="1">
    <source>
        <dbReference type="UniProtKB" id="A0A009IHW8"/>
    </source>
</evidence>
<evidence type="ECO:0000269" key="2">
    <source>
    </source>
</evidence>
<evidence type="ECO:0000303" key="3">
    <source>
    </source>
</evidence>
<evidence type="ECO:0000305" key="4"/>
<evidence type="ECO:0000305" key="5">
    <source>
    </source>
</evidence>
<evidence type="ECO:0000312" key="6">
    <source>
        <dbReference type="EMBL" id="EJR09239.1"/>
    </source>
</evidence>
<evidence type="ECO:0007829" key="7">
    <source>
        <dbReference type="PDB" id="8BTN"/>
    </source>
</evidence>
<proteinExistence type="evidence at protein level"/>
<gene>
    <name evidence="3" type="primary">thsB'</name>
    <name evidence="6" type="ORF">II9_05447</name>
</gene>
<accession>J8CSK2</accession>
<comment type="function">
    <text evidence="2 5">TIR-like domain-containing component of the Thoeris antiviral defense system, composed of ThsA and ThsB and ThsB' (Probable). In the presence of NAD(+) produces a signaling molecule that activates cognate ThsA (AC J8G6Z1) to hydrolyze NAD(+) (PubMed:36174646). The signaling molecule is a cyclic ADP-D-ribose isomer and may be 3' cyclic ADP-D-ribose (3'cADPR); it is not 2'cADPR (Probable).</text>
</comment>
<comment type="catalytic activity">
    <reaction evidence="5">
        <text>NAD(+) = 3'cADPR + nicotinamide + H(+)</text>
        <dbReference type="Rhea" id="RHEA:75303"/>
        <dbReference type="ChEBI" id="CHEBI:15378"/>
        <dbReference type="ChEBI" id="CHEBI:17154"/>
        <dbReference type="ChEBI" id="CHEBI:57540"/>
        <dbReference type="ChEBI" id="CHEBI:194249"/>
    </reaction>
</comment>
<comment type="subunit">
    <text evidence="1">Homodimer.</text>
</comment>
<sequence length="193" mass="22734">MTLFTENDLLNNSYKSIQKSYHFSENQAAKNILEQAYKNYDKNKIYDIFLSHSFLDARKILGLKNYIEGLGYSVYVDWIEDKQLDRSKVSKETAGILRERMQSCKSLFFAISENSDHSLWMPWELGYFDGIKQKVAILPVLKSSYDDSYNGQEYLGLYPYVAKGTIINSTQEEIWIHSSQKQYVRFRNWLQQN</sequence>
<keyword id="KW-0002">3D-structure</keyword>
<keyword id="KW-0378">Hydrolase</keyword>
<keyword id="KW-0520">NAD</keyword>
<dbReference type="EC" id="3.2.2.-" evidence="5"/>
<dbReference type="EMBL" id="AHEQ01000050">
    <property type="protein sequence ID" value="EJR09239.1"/>
    <property type="molecule type" value="Genomic_DNA"/>
</dbReference>
<dbReference type="PDB" id="8BTN">
    <property type="method" value="X-ray"/>
    <property type="resolution" value="3.10 A"/>
    <property type="chains" value="A/B=1-193"/>
</dbReference>
<dbReference type="PDBsum" id="8BTN"/>
<dbReference type="SMR" id="J8CSK2"/>
<dbReference type="PATRIC" id="fig|1053222.3.peg.5514"/>
<dbReference type="HOGENOM" id="CLU_115440_0_0_9"/>
<dbReference type="GO" id="GO:0016787">
    <property type="term" value="F:hydrolase activity"/>
    <property type="evidence" value="ECO:0007669"/>
    <property type="project" value="UniProtKB-KW"/>
</dbReference>
<dbReference type="Gene3D" id="3.40.50.10140">
    <property type="entry name" value="Toll/interleukin-1 receptor homology (TIR) domain"/>
    <property type="match status" value="1"/>
</dbReference>
<dbReference type="InterPro" id="IPR035897">
    <property type="entry name" value="Toll_tir_struct_dom_sf"/>
</dbReference>
<dbReference type="SUPFAM" id="SSF52200">
    <property type="entry name" value="Toll/Interleukin receptor TIR domain"/>
    <property type="match status" value="1"/>
</dbReference>
<reference evidence="6" key="1">
    <citation type="submission" date="2012-04" db="EMBL/GenBank/DDBJ databases">
        <title>The Genome Sequence of Bacillus cereus MSX-D12.</title>
        <authorList>
            <consortium name="The Broad Institute Genome Sequencing Platform"/>
            <consortium name="The Broad Institute Genome Sequencing Center for Infectious Disease"/>
            <person name="Feldgarden M."/>
            <person name="Van der Auwera G.A."/>
            <person name="Mahillon J."/>
            <person name="Duprez V."/>
            <person name="Timmery S."/>
            <person name="Mattelet C."/>
            <person name="Dierick K."/>
            <person name="Sun M."/>
            <person name="Yu Z."/>
            <person name="Zhu L."/>
            <person name="Hu X."/>
            <person name="Shank E.B."/>
            <person name="Swiecicka I."/>
            <person name="Hansen B.M."/>
            <person name="Andrup L."/>
            <person name="Young S.K."/>
            <person name="Zeng Q."/>
            <person name="Gargeya S."/>
            <person name="Fitzgerald M."/>
            <person name="Haas B."/>
            <person name="Abouelleil A."/>
            <person name="Alvarado L."/>
            <person name="Arachchi H.M."/>
            <person name="Berlin A."/>
            <person name="Chapman S.B."/>
            <person name="Goldberg J."/>
            <person name="Griggs A."/>
            <person name="Gujja S."/>
            <person name="Hansen M."/>
            <person name="Howarth C."/>
            <person name="Imamovic A."/>
            <person name="Larimer J."/>
            <person name="McCowen C."/>
            <person name="Montmayeur A."/>
            <person name="Murphy C."/>
            <person name="Neiman D."/>
            <person name="Pearson M."/>
            <person name="Priest M."/>
            <person name="Roberts A."/>
            <person name="Saif S."/>
            <person name="Shea T."/>
            <person name="Sisk P."/>
            <person name="Sykes S."/>
            <person name="Wortman J."/>
            <person name="Nusbaum C."/>
            <person name="Birren B."/>
        </authorList>
    </citation>
    <scope>NUCLEOTIDE SEQUENCE [LARGE SCALE GENOMIC DNA]</scope>
    <source>
        <strain>MSX-D12</strain>
    </source>
</reference>
<reference key="2">
    <citation type="journal article" date="2022" name="Nature">
        <title>Viruses inhibit TIR gcADPR signalling to overcome bacterial defence.</title>
        <authorList>
            <person name="Leavitt A."/>
            <person name="Yirmiya E."/>
            <person name="Amitai G."/>
            <person name="Lu A."/>
            <person name="Garb J."/>
            <person name="Herbst E."/>
            <person name="Morehouse B.R."/>
            <person name="Hobbs S.J."/>
            <person name="Antine S.P."/>
            <person name="Sun Z.J."/>
            <person name="Kranzusch P.J."/>
            <person name="Sorek R."/>
        </authorList>
    </citation>
    <scope>FUNCTION</scope>
    <scope>POSSIBLE CATALYTIC ACTIVITY</scope>
    <source>
        <strain>MSX-D12</strain>
    </source>
</reference>
<name>THSB2_BACCS</name>
<organism>
    <name type="scientific">Bacillus cereus (strain MSX-D12)</name>
    <dbReference type="NCBI Taxonomy" id="1053222"/>
    <lineage>
        <taxon>Bacteria</taxon>
        <taxon>Bacillati</taxon>
        <taxon>Bacillota</taxon>
        <taxon>Bacilli</taxon>
        <taxon>Bacillales</taxon>
        <taxon>Bacillaceae</taxon>
        <taxon>Bacillus</taxon>
        <taxon>Bacillus cereus group</taxon>
    </lineage>
</organism>
<feature type="chain" id="PRO_0000457990" description="Probable 3' cyclic ADP-D-ribose synthase ThsB'">
    <location>
        <begin position="1"/>
        <end position="193"/>
    </location>
</feature>
<feature type="helix" evidence="7">
    <location>
        <begin position="6"/>
        <end position="13"/>
    </location>
</feature>
<feature type="helix" evidence="7">
    <location>
        <begin position="26"/>
        <end position="38"/>
    </location>
</feature>
<feature type="strand" evidence="7">
    <location>
        <begin position="46"/>
        <end position="54"/>
    </location>
</feature>
<feature type="helix" evidence="7">
    <location>
        <begin position="57"/>
        <end position="70"/>
    </location>
</feature>
<feature type="strand" evidence="7">
    <location>
        <begin position="74"/>
        <end position="76"/>
    </location>
</feature>
<feature type="helix" evidence="7">
    <location>
        <begin position="91"/>
        <end position="101"/>
    </location>
</feature>
<feature type="strand" evidence="7">
    <location>
        <begin position="104"/>
        <end position="112"/>
    </location>
</feature>
<feature type="helix" evidence="7">
    <location>
        <begin position="121"/>
        <end position="131"/>
    </location>
</feature>
<feature type="strand" evidence="7">
    <location>
        <begin position="135"/>
        <end position="142"/>
    </location>
</feature>
<feature type="helix" evidence="7">
    <location>
        <begin position="153"/>
        <end position="156"/>
    </location>
</feature>
<feature type="strand" evidence="7">
    <location>
        <begin position="160"/>
        <end position="163"/>
    </location>
</feature>
<feature type="strand" evidence="7">
    <location>
        <begin position="175"/>
        <end position="181"/>
    </location>
</feature>
<feature type="strand" evidence="7">
    <location>
        <begin position="183"/>
        <end position="185"/>
    </location>
</feature>
<feature type="helix" evidence="7">
    <location>
        <begin position="186"/>
        <end position="191"/>
    </location>
</feature>
<protein>
    <recommendedName>
        <fullName evidence="4">Probable 3' cyclic ADP-D-ribose synthase ThsB'</fullName>
        <shortName evidence="4">3'cADPR synthase ThsB'</shortName>
        <ecNumber evidence="5">3.2.2.-</ecNumber>
    </recommendedName>
    <alternativeName>
        <fullName evidence="3">Thoeris protein ThsB'</fullName>
    </alternativeName>
</protein>